<gene>
    <name type="primary">purB</name>
    <name type="ordered locus">SH1043</name>
</gene>
<protein>
    <recommendedName>
        <fullName>Adenylosuccinate lyase</fullName>
        <shortName>ASL</shortName>
        <ecNumber evidence="2">4.3.2.2</ecNumber>
    </recommendedName>
    <alternativeName>
        <fullName>Adenylosuccinase</fullName>
        <shortName>ASase</shortName>
    </alternativeName>
</protein>
<dbReference type="EC" id="4.3.2.2" evidence="2"/>
<dbReference type="EMBL" id="AP006716">
    <property type="protein sequence ID" value="BAE04352.1"/>
    <property type="molecule type" value="Genomic_DNA"/>
</dbReference>
<dbReference type="RefSeq" id="WP_011275349.1">
    <property type="nucleotide sequence ID" value="NC_007168.1"/>
</dbReference>
<dbReference type="SMR" id="Q4L7M3"/>
<dbReference type="KEGG" id="sha:SH1043"/>
<dbReference type="eggNOG" id="COG0015">
    <property type="taxonomic scope" value="Bacteria"/>
</dbReference>
<dbReference type="HOGENOM" id="CLU_030949_0_1_9"/>
<dbReference type="OrthoDB" id="9768878at2"/>
<dbReference type="UniPathway" id="UPA00074">
    <property type="reaction ID" value="UER00132"/>
</dbReference>
<dbReference type="UniPathway" id="UPA00075">
    <property type="reaction ID" value="UER00336"/>
</dbReference>
<dbReference type="Proteomes" id="UP000000543">
    <property type="component" value="Chromosome"/>
</dbReference>
<dbReference type="GO" id="GO:0005829">
    <property type="term" value="C:cytosol"/>
    <property type="evidence" value="ECO:0007669"/>
    <property type="project" value="TreeGrafter"/>
</dbReference>
<dbReference type="GO" id="GO:0070626">
    <property type="term" value="F:(S)-2-(5-amino-1-(5-phospho-D-ribosyl)imidazole-4-carboxamido) succinate lyase (fumarate-forming) activity"/>
    <property type="evidence" value="ECO:0007669"/>
    <property type="project" value="TreeGrafter"/>
</dbReference>
<dbReference type="GO" id="GO:0004018">
    <property type="term" value="F:N6-(1,2-dicarboxyethyl)AMP AMP-lyase (fumarate-forming) activity"/>
    <property type="evidence" value="ECO:0007669"/>
    <property type="project" value="InterPro"/>
</dbReference>
<dbReference type="GO" id="GO:0044208">
    <property type="term" value="P:'de novo' AMP biosynthetic process"/>
    <property type="evidence" value="ECO:0007669"/>
    <property type="project" value="UniProtKB-UniPathway"/>
</dbReference>
<dbReference type="GO" id="GO:0006189">
    <property type="term" value="P:'de novo' IMP biosynthetic process"/>
    <property type="evidence" value="ECO:0007669"/>
    <property type="project" value="UniProtKB-UniPathway"/>
</dbReference>
<dbReference type="CDD" id="cd01360">
    <property type="entry name" value="Adenylsuccinate_lyase_1"/>
    <property type="match status" value="1"/>
</dbReference>
<dbReference type="FunFam" id="1.10.275.10:FF:000006">
    <property type="entry name" value="Adenylosuccinate lyase"/>
    <property type="match status" value="1"/>
</dbReference>
<dbReference type="FunFam" id="1.10.40.30:FF:000007">
    <property type="entry name" value="Adenylosuccinate lyase"/>
    <property type="match status" value="1"/>
</dbReference>
<dbReference type="FunFam" id="1.20.200.10:FF:000008">
    <property type="entry name" value="Adenylosuccinate lyase"/>
    <property type="match status" value="1"/>
</dbReference>
<dbReference type="Gene3D" id="1.10.40.30">
    <property type="entry name" value="Fumarase/aspartase (C-terminal domain)"/>
    <property type="match status" value="1"/>
</dbReference>
<dbReference type="Gene3D" id="1.20.200.10">
    <property type="entry name" value="Fumarase/aspartase (Central domain)"/>
    <property type="match status" value="1"/>
</dbReference>
<dbReference type="Gene3D" id="1.10.275.10">
    <property type="entry name" value="Fumarase/aspartase (N-terminal domain)"/>
    <property type="match status" value="1"/>
</dbReference>
<dbReference type="InterPro" id="IPR019468">
    <property type="entry name" value="AdenyloSucc_lyase_C"/>
</dbReference>
<dbReference type="InterPro" id="IPR024083">
    <property type="entry name" value="Fumarase/histidase_N"/>
</dbReference>
<dbReference type="InterPro" id="IPR020557">
    <property type="entry name" value="Fumarate_lyase_CS"/>
</dbReference>
<dbReference type="InterPro" id="IPR000362">
    <property type="entry name" value="Fumarate_lyase_fam"/>
</dbReference>
<dbReference type="InterPro" id="IPR022761">
    <property type="entry name" value="Fumarate_lyase_N"/>
</dbReference>
<dbReference type="InterPro" id="IPR008948">
    <property type="entry name" value="L-Aspartase-like"/>
</dbReference>
<dbReference type="InterPro" id="IPR004769">
    <property type="entry name" value="Pur_lyase"/>
</dbReference>
<dbReference type="NCBIfam" id="TIGR00928">
    <property type="entry name" value="purB"/>
    <property type="match status" value="1"/>
</dbReference>
<dbReference type="PANTHER" id="PTHR43172">
    <property type="entry name" value="ADENYLOSUCCINATE LYASE"/>
    <property type="match status" value="1"/>
</dbReference>
<dbReference type="PANTHER" id="PTHR43172:SF1">
    <property type="entry name" value="ADENYLOSUCCINATE LYASE"/>
    <property type="match status" value="1"/>
</dbReference>
<dbReference type="Pfam" id="PF10397">
    <property type="entry name" value="ADSL_C"/>
    <property type="match status" value="1"/>
</dbReference>
<dbReference type="Pfam" id="PF00206">
    <property type="entry name" value="Lyase_1"/>
    <property type="match status" value="1"/>
</dbReference>
<dbReference type="PRINTS" id="PR00145">
    <property type="entry name" value="ARGSUCLYASE"/>
</dbReference>
<dbReference type="PRINTS" id="PR00149">
    <property type="entry name" value="FUMRATELYASE"/>
</dbReference>
<dbReference type="SMART" id="SM00998">
    <property type="entry name" value="ADSL_C"/>
    <property type="match status" value="1"/>
</dbReference>
<dbReference type="SUPFAM" id="SSF48557">
    <property type="entry name" value="L-aspartase-like"/>
    <property type="match status" value="1"/>
</dbReference>
<dbReference type="PROSITE" id="PS00163">
    <property type="entry name" value="FUMARATE_LYASES"/>
    <property type="match status" value="1"/>
</dbReference>
<keyword id="KW-0456">Lyase</keyword>
<keyword id="KW-0658">Purine biosynthesis</keyword>
<proteinExistence type="inferred from homology"/>
<name>PUR8_STAHJ</name>
<accession>Q4L7M3</accession>
<sequence>MIDRYSREEMANIWTDQNRYEAWLEVEILACEAWSELGHIPKEDVKKIRQNAKVDVKRAQEIEQETRHDVVAFTRQVSETLGDERKWVHYGLTSTDVVDTALSYVIKQANEIIEKDIERFIKVLEEKAKNYKYTLMMGRTHGVHAEPTTFGVKMALWYTEMKRNLKRFKEVRKEIEVGKMSGAVGTFANIPPEIEQYVCDHLGIDTASVSTQTLQRDRHAYYIATLALVATSLEKFAVEIRNLQKTETREVEEAFAKGQKGSSAMPHKRNPIGSENITGISRVIRGYITTAYENVPLWHERDISHSSAERIMLPDVTIALDYALNRFTNIVDRLTVFEDNMRNNIDKTFGLIFSQRVLLALINKGMVREEAYDRVQPKAMESWETKTPFRQLIEKDESITNVLSKEELDECFNPEHHLNQVDTIFKRAGLE</sequence>
<reference key="1">
    <citation type="journal article" date="2005" name="J. Bacteriol.">
        <title>Whole-genome sequencing of Staphylococcus haemolyticus uncovers the extreme plasticity of its genome and the evolution of human-colonizing staphylococcal species.</title>
        <authorList>
            <person name="Takeuchi F."/>
            <person name="Watanabe S."/>
            <person name="Baba T."/>
            <person name="Yuzawa H."/>
            <person name="Ito T."/>
            <person name="Morimoto Y."/>
            <person name="Kuroda M."/>
            <person name="Cui L."/>
            <person name="Takahashi M."/>
            <person name="Ankai A."/>
            <person name="Baba S."/>
            <person name="Fukui S."/>
            <person name="Lee J.C."/>
            <person name="Hiramatsu K."/>
        </authorList>
    </citation>
    <scope>NUCLEOTIDE SEQUENCE [LARGE SCALE GENOMIC DNA]</scope>
    <source>
        <strain>JCSC1435</strain>
    </source>
</reference>
<organism>
    <name type="scientific">Staphylococcus haemolyticus (strain JCSC1435)</name>
    <dbReference type="NCBI Taxonomy" id="279808"/>
    <lineage>
        <taxon>Bacteria</taxon>
        <taxon>Bacillati</taxon>
        <taxon>Bacillota</taxon>
        <taxon>Bacilli</taxon>
        <taxon>Bacillales</taxon>
        <taxon>Staphylococcaceae</taxon>
        <taxon>Staphylococcus</taxon>
    </lineage>
</organism>
<evidence type="ECO:0000250" key="1"/>
<evidence type="ECO:0000250" key="2">
    <source>
        <dbReference type="UniProtKB" id="P0AB89"/>
    </source>
</evidence>
<evidence type="ECO:0000305" key="3"/>
<feature type="chain" id="PRO_0000259984" description="Adenylosuccinate lyase">
    <location>
        <begin position="1"/>
        <end position="431"/>
    </location>
</feature>
<feature type="active site" description="Proton donor/acceptor" evidence="2">
    <location>
        <position position="141"/>
    </location>
</feature>
<feature type="active site" description="Proton donor/acceptor" evidence="2">
    <location>
        <position position="262"/>
    </location>
</feature>
<feature type="binding site" evidence="2">
    <location>
        <begin position="4"/>
        <end position="5"/>
    </location>
    <ligand>
        <name>N(6)-(1,2-dicarboxyethyl)-AMP</name>
        <dbReference type="ChEBI" id="CHEBI:57567"/>
    </ligand>
</feature>
<feature type="binding site" evidence="2">
    <location>
        <begin position="67"/>
        <end position="69"/>
    </location>
    <ligand>
        <name>N(6)-(1,2-dicarboxyethyl)-AMP</name>
        <dbReference type="ChEBI" id="CHEBI:57567"/>
    </ligand>
</feature>
<feature type="binding site" evidence="2">
    <location>
        <begin position="93"/>
        <end position="94"/>
    </location>
    <ligand>
        <name>N(6)-(1,2-dicarboxyethyl)-AMP</name>
        <dbReference type="ChEBI" id="CHEBI:57567"/>
    </ligand>
</feature>
<feature type="binding site" evidence="2">
    <location>
        <position position="212"/>
    </location>
    <ligand>
        <name>N(6)-(1,2-dicarboxyethyl)-AMP</name>
        <dbReference type="ChEBI" id="CHEBI:57567"/>
    </ligand>
</feature>
<feature type="binding site" evidence="2">
    <location>
        <position position="263"/>
    </location>
    <ligand>
        <name>N(6)-(1,2-dicarboxyethyl)-AMP</name>
        <dbReference type="ChEBI" id="CHEBI:57567"/>
    </ligand>
</feature>
<feature type="binding site" evidence="2">
    <location>
        <begin position="268"/>
        <end position="270"/>
    </location>
    <ligand>
        <name>N(6)-(1,2-dicarboxyethyl)-AMP</name>
        <dbReference type="ChEBI" id="CHEBI:57567"/>
    </ligand>
</feature>
<feature type="binding site" evidence="2">
    <location>
        <position position="276"/>
    </location>
    <ligand>
        <name>N(6)-(1,2-dicarboxyethyl)-AMP</name>
        <dbReference type="ChEBI" id="CHEBI:57567"/>
    </ligand>
</feature>
<feature type="binding site" evidence="2">
    <location>
        <begin position="307"/>
        <end position="311"/>
    </location>
    <ligand>
        <name>N(6)-(1,2-dicarboxyethyl)-AMP</name>
        <dbReference type="ChEBI" id="CHEBI:57567"/>
    </ligand>
</feature>
<comment type="function">
    <text evidence="2">Catalyzes two reactions in de novo purine nucleotide biosynthesis. Catalyzes the breakdown of 5-aminoimidazole- (N-succinylocarboxamide) ribotide (SAICAR or 2-[5-amino-1-(5-phospho-beta-D-ribosyl)imidazole-4-carboxamido]succinate) to 5-aminoimidazole-4-carboxamide ribotide (AICAR or 5-amino-1-(5-phospho-beta-D-ribosyl)imidazole-4-carboxamide) and fumarate, and of adenylosuccinate (ADS or N(6)-(1,2-dicarboxyethyl)-AMP) to adenosine monophosphate (AMP) and fumarate.</text>
</comment>
<comment type="catalytic activity">
    <reaction evidence="2">
        <text>N(6)-(1,2-dicarboxyethyl)-AMP = fumarate + AMP</text>
        <dbReference type="Rhea" id="RHEA:16853"/>
        <dbReference type="ChEBI" id="CHEBI:29806"/>
        <dbReference type="ChEBI" id="CHEBI:57567"/>
        <dbReference type="ChEBI" id="CHEBI:456215"/>
        <dbReference type="EC" id="4.3.2.2"/>
    </reaction>
    <physiologicalReaction direction="left-to-right" evidence="2">
        <dbReference type="Rhea" id="RHEA:16854"/>
    </physiologicalReaction>
</comment>
<comment type="catalytic activity">
    <reaction evidence="2">
        <text>(2S)-2-[5-amino-1-(5-phospho-beta-D-ribosyl)imidazole-4-carboxamido]succinate = 5-amino-1-(5-phospho-beta-D-ribosyl)imidazole-4-carboxamide + fumarate</text>
        <dbReference type="Rhea" id="RHEA:23920"/>
        <dbReference type="ChEBI" id="CHEBI:29806"/>
        <dbReference type="ChEBI" id="CHEBI:58443"/>
        <dbReference type="ChEBI" id="CHEBI:58475"/>
        <dbReference type="EC" id="4.3.2.2"/>
    </reaction>
    <physiologicalReaction direction="left-to-right" evidence="2">
        <dbReference type="Rhea" id="RHEA:23921"/>
    </physiologicalReaction>
</comment>
<comment type="pathway">
    <text>Purine metabolism; AMP biosynthesis via de novo pathway; AMP from IMP: step 2/2.</text>
</comment>
<comment type="pathway">
    <text>Purine metabolism; IMP biosynthesis via de novo pathway; 5-amino-1-(5-phospho-D-ribosyl)imidazole-4-carboxamide from 5-amino-1-(5-phospho-D-ribosyl)imidazole-4-carboxylate: step 2/2.</text>
</comment>
<comment type="subunit">
    <text evidence="1">Homodimer and homotetramer. Residues from neighboring subunits contribute catalytic and substrate-binding residues to each active site (By similarity).</text>
</comment>
<comment type="similarity">
    <text evidence="3">Belongs to the lyase 1 family. Adenylosuccinate lyase subfamily.</text>
</comment>